<proteinExistence type="inferred from homology"/>
<evidence type="ECO:0000255" key="1">
    <source>
        <dbReference type="HAMAP-Rule" id="MF_01208"/>
    </source>
</evidence>
<comment type="function">
    <text evidence="1">Catalyzes the transfer of a ribosyl phosphate group from 5-phosphoribose 1-diphosphate to orotate, leading to the formation of orotidine monophosphate (OMP).</text>
</comment>
<comment type="catalytic activity">
    <reaction evidence="1">
        <text>orotidine 5'-phosphate + diphosphate = orotate + 5-phospho-alpha-D-ribose 1-diphosphate</text>
        <dbReference type="Rhea" id="RHEA:10380"/>
        <dbReference type="ChEBI" id="CHEBI:30839"/>
        <dbReference type="ChEBI" id="CHEBI:33019"/>
        <dbReference type="ChEBI" id="CHEBI:57538"/>
        <dbReference type="ChEBI" id="CHEBI:58017"/>
        <dbReference type="EC" id="2.4.2.10"/>
    </reaction>
</comment>
<comment type="cofactor">
    <cofactor evidence="1">
        <name>Mg(2+)</name>
        <dbReference type="ChEBI" id="CHEBI:18420"/>
    </cofactor>
</comment>
<comment type="pathway">
    <text evidence="1">Pyrimidine metabolism; UMP biosynthesis via de novo pathway; UMP from orotate: step 1/2.</text>
</comment>
<comment type="subunit">
    <text evidence="1">Homodimer.</text>
</comment>
<comment type="similarity">
    <text evidence="1">Belongs to the purine/pyrimidine phosphoribosyltransferase family. PyrE subfamily.</text>
</comment>
<keyword id="KW-0328">Glycosyltransferase</keyword>
<keyword id="KW-0460">Magnesium</keyword>
<keyword id="KW-0665">Pyrimidine biosynthesis</keyword>
<keyword id="KW-1185">Reference proteome</keyword>
<keyword id="KW-0808">Transferase</keyword>
<reference key="1">
    <citation type="journal article" date="2010" name="J. Bacteriol.">
        <title>Genome sequence of the dioxin-mineralizing bacterium Sphingomonas wittichii RW1.</title>
        <authorList>
            <person name="Miller T.R."/>
            <person name="Delcher A.L."/>
            <person name="Salzberg S.L."/>
            <person name="Saunders E."/>
            <person name="Detter J.C."/>
            <person name="Halden R.U."/>
        </authorList>
    </citation>
    <scope>NUCLEOTIDE SEQUENCE [LARGE SCALE GENOMIC DNA]</scope>
    <source>
        <strain>DSM 6014 / CCUG 31198 / JCM 15750 / NBRC 105917 / EY 4224 / RW1</strain>
    </source>
</reference>
<dbReference type="EC" id="2.4.2.10" evidence="1"/>
<dbReference type="EMBL" id="CP000699">
    <property type="protein sequence ID" value="ABQ70219.1"/>
    <property type="molecule type" value="Genomic_DNA"/>
</dbReference>
<dbReference type="SMR" id="A5VD53"/>
<dbReference type="STRING" id="392499.Swit_3874"/>
<dbReference type="PaxDb" id="392499-Swit_3874"/>
<dbReference type="KEGG" id="swi:Swit_3874"/>
<dbReference type="eggNOG" id="COG0461">
    <property type="taxonomic scope" value="Bacteria"/>
</dbReference>
<dbReference type="HOGENOM" id="CLU_074878_3_0_5"/>
<dbReference type="OrthoDB" id="9783570at2"/>
<dbReference type="UniPathway" id="UPA00070">
    <property type="reaction ID" value="UER00119"/>
</dbReference>
<dbReference type="Proteomes" id="UP000001989">
    <property type="component" value="Chromosome"/>
</dbReference>
<dbReference type="GO" id="GO:0000287">
    <property type="term" value="F:magnesium ion binding"/>
    <property type="evidence" value="ECO:0007669"/>
    <property type="project" value="UniProtKB-UniRule"/>
</dbReference>
<dbReference type="GO" id="GO:0004588">
    <property type="term" value="F:orotate phosphoribosyltransferase activity"/>
    <property type="evidence" value="ECO:0007669"/>
    <property type="project" value="UniProtKB-UniRule"/>
</dbReference>
<dbReference type="GO" id="GO:0044205">
    <property type="term" value="P:'de novo' UMP biosynthetic process"/>
    <property type="evidence" value="ECO:0007669"/>
    <property type="project" value="UniProtKB-UniRule"/>
</dbReference>
<dbReference type="GO" id="GO:0019856">
    <property type="term" value="P:pyrimidine nucleobase biosynthetic process"/>
    <property type="evidence" value="ECO:0007669"/>
    <property type="project" value="InterPro"/>
</dbReference>
<dbReference type="CDD" id="cd06223">
    <property type="entry name" value="PRTases_typeI"/>
    <property type="match status" value="1"/>
</dbReference>
<dbReference type="Gene3D" id="3.40.50.2020">
    <property type="match status" value="1"/>
</dbReference>
<dbReference type="HAMAP" id="MF_01208">
    <property type="entry name" value="PyrE"/>
    <property type="match status" value="1"/>
</dbReference>
<dbReference type="InterPro" id="IPR023031">
    <property type="entry name" value="OPRT"/>
</dbReference>
<dbReference type="InterPro" id="IPR006273">
    <property type="entry name" value="Orotate_PRibTrfase_bac"/>
</dbReference>
<dbReference type="InterPro" id="IPR000836">
    <property type="entry name" value="PRibTrfase_dom"/>
</dbReference>
<dbReference type="InterPro" id="IPR029057">
    <property type="entry name" value="PRTase-like"/>
</dbReference>
<dbReference type="NCBIfam" id="TIGR01367">
    <property type="entry name" value="pyrE_Therm"/>
    <property type="match status" value="1"/>
</dbReference>
<dbReference type="PANTHER" id="PTHR19278">
    <property type="entry name" value="OROTATE PHOSPHORIBOSYLTRANSFERASE"/>
    <property type="match status" value="1"/>
</dbReference>
<dbReference type="PANTHER" id="PTHR19278:SF9">
    <property type="entry name" value="URIDINE 5'-MONOPHOSPHATE SYNTHASE"/>
    <property type="match status" value="1"/>
</dbReference>
<dbReference type="Pfam" id="PF00156">
    <property type="entry name" value="Pribosyltran"/>
    <property type="match status" value="1"/>
</dbReference>
<dbReference type="SUPFAM" id="SSF53271">
    <property type="entry name" value="PRTase-like"/>
    <property type="match status" value="1"/>
</dbReference>
<dbReference type="PROSITE" id="PS00103">
    <property type="entry name" value="PUR_PYR_PR_TRANSFER"/>
    <property type="match status" value="1"/>
</dbReference>
<sequence length="196" mass="20811">MTDEQVLAEFRAAEALLEGHFILSSGLRSSRYLQCARVLMNPARAARLAEALAFKIPDKLKIQLGSVVSPAMGGVIAGHEMGRALGLDAMFVERPDGVFHLRRGFRLEPGQKVLLMEDVVTTGLSSREAIKAVEEAGGQVIAAAALVDRSNGTADLGVPFYPLIRLDVPTYQPESLPPELAAIPAVKPGSRAAVAA</sequence>
<gene>
    <name evidence="1" type="primary">pyrE</name>
    <name type="ordered locus">Swit_3874</name>
</gene>
<name>PYRE_RHIWR</name>
<feature type="chain" id="PRO_1000066304" description="Orotate phosphoribosyltransferase">
    <location>
        <begin position="1"/>
        <end position="196"/>
    </location>
</feature>
<feature type="binding site" evidence="1">
    <location>
        <begin position="117"/>
        <end position="125"/>
    </location>
    <ligand>
        <name>5-phospho-alpha-D-ribose 1-diphosphate</name>
        <dbReference type="ChEBI" id="CHEBI:58017"/>
    </ligand>
</feature>
<feature type="binding site" evidence="1">
    <location>
        <position position="121"/>
    </location>
    <ligand>
        <name>orotate</name>
        <dbReference type="ChEBI" id="CHEBI:30839"/>
    </ligand>
</feature>
<feature type="binding site" evidence="1">
    <location>
        <position position="149"/>
    </location>
    <ligand>
        <name>orotate</name>
        <dbReference type="ChEBI" id="CHEBI:30839"/>
    </ligand>
</feature>
<protein>
    <recommendedName>
        <fullName evidence="1">Orotate phosphoribosyltransferase</fullName>
        <shortName evidence="1">OPRT</shortName>
        <shortName evidence="1">OPRTase</shortName>
        <ecNumber evidence="1">2.4.2.10</ecNumber>
    </recommendedName>
</protein>
<accession>A5VD53</accession>
<organism>
    <name type="scientific">Rhizorhabdus wittichii (strain DSM 6014 / CCUG 31198 / JCM 15750 / NBRC 105917 / EY 4224 / RW1)</name>
    <name type="common">Sphingomonas wittichii</name>
    <dbReference type="NCBI Taxonomy" id="392499"/>
    <lineage>
        <taxon>Bacteria</taxon>
        <taxon>Pseudomonadati</taxon>
        <taxon>Pseudomonadota</taxon>
        <taxon>Alphaproteobacteria</taxon>
        <taxon>Sphingomonadales</taxon>
        <taxon>Sphingomonadaceae</taxon>
        <taxon>Rhizorhabdus</taxon>
    </lineage>
</organism>